<keyword id="KW-0066">ATP synthesis</keyword>
<keyword id="KW-0067">ATP-binding</keyword>
<keyword id="KW-0139">CF(1)</keyword>
<keyword id="KW-0150">Chloroplast</keyword>
<keyword id="KW-0375">Hydrogen ion transport</keyword>
<keyword id="KW-0406">Ion transport</keyword>
<keyword id="KW-0472">Membrane</keyword>
<keyword id="KW-0547">Nucleotide-binding</keyword>
<keyword id="KW-0597">Phosphoprotein</keyword>
<keyword id="KW-0934">Plastid</keyword>
<keyword id="KW-0793">Thylakoid</keyword>
<keyword id="KW-1278">Translocase</keyword>
<keyword id="KW-0813">Transport</keyword>
<evidence type="ECO:0000250" key="1">
    <source>
        <dbReference type="UniProtKB" id="P56757"/>
    </source>
</evidence>
<evidence type="ECO:0000255" key="2">
    <source>
        <dbReference type="HAMAP-Rule" id="MF_01346"/>
    </source>
</evidence>
<proteinExistence type="inferred from homology"/>
<geneLocation type="chloroplast"/>
<comment type="function">
    <text evidence="2">Produces ATP from ADP in the presence of a proton gradient across the membrane. The alpha chain is a regulatory subunit.</text>
</comment>
<comment type="catalytic activity">
    <reaction evidence="2">
        <text>ATP + H2O + 4 H(+)(in) = ADP + phosphate + 5 H(+)(out)</text>
        <dbReference type="Rhea" id="RHEA:57720"/>
        <dbReference type="ChEBI" id="CHEBI:15377"/>
        <dbReference type="ChEBI" id="CHEBI:15378"/>
        <dbReference type="ChEBI" id="CHEBI:30616"/>
        <dbReference type="ChEBI" id="CHEBI:43474"/>
        <dbReference type="ChEBI" id="CHEBI:456216"/>
        <dbReference type="EC" id="7.1.2.2"/>
    </reaction>
</comment>
<comment type="subunit">
    <text evidence="2">F-type ATPases have 2 components, CF(1) - the catalytic core - and CF(0) - the membrane proton channel. CF(1) has five subunits: alpha(3), beta(3), gamma(1), delta(1), epsilon(1). CF(0) has four main subunits: a, b, b' and c.</text>
</comment>
<comment type="subcellular location">
    <subcellularLocation>
        <location evidence="2">Plastid</location>
        <location evidence="2">Chloroplast thylakoid membrane</location>
        <topology evidence="2">Peripheral membrane protein</topology>
    </subcellularLocation>
</comment>
<comment type="similarity">
    <text evidence="2">Belongs to the ATPase alpha/beta chains family.</text>
</comment>
<dbReference type="EC" id="7.1.2.2" evidence="2"/>
<dbReference type="EMBL" id="AP009369">
    <property type="protein sequence ID" value="BAF50008.1"/>
    <property type="molecule type" value="Genomic_DNA"/>
</dbReference>
<dbReference type="RefSeq" id="YP_001123184.1">
    <property type="nucleotide sequence ID" value="NC_009268.1"/>
</dbReference>
<dbReference type="SMR" id="A4QK03"/>
<dbReference type="GeneID" id="4962501"/>
<dbReference type="GO" id="GO:0009535">
    <property type="term" value="C:chloroplast thylakoid membrane"/>
    <property type="evidence" value="ECO:0007669"/>
    <property type="project" value="UniProtKB-SubCell"/>
</dbReference>
<dbReference type="GO" id="GO:0045259">
    <property type="term" value="C:proton-transporting ATP synthase complex"/>
    <property type="evidence" value="ECO:0007669"/>
    <property type="project" value="UniProtKB-KW"/>
</dbReference>
<dbReference type="GO" id="GO:0043531">
    <property type="term" value="F:ADP binding"/>
    <property type="evidence" value="ECO:0007669"/>
    <property type="project" value="TreeGrafter"/>
</dbReference>
<dbReference type="GO" id="GO:0005524">
    <property type="term" value="F:ATP binding"/>
    <property type="evidence" value="ECO:0007669"/>
    <property type="project" value="UniProtKB-UniRule"/>
</dbReference>
<dbReference type="GO" id="GO:0046933">
    <property type="term" value="F:proton-transporting ATP synthase activity, rotational mechanism"/>
    <property type="evidence" value="ECO:0007669"/>
    <property type="project" value="UniProtKB-UniRule"/>
</dbReference>
<dbReference type="CDD" id="cd18113">
    <property type="entry name" value="ATP-synt_F1_alpha_C"/>
    <property type="match status" value="1"/>
</dbReference>
<dbReference type="CDD" id="cd18116">
    <property type="entry name" value="ATP-synt_F1_alpha_N"/>
    <property type="match status" value="1"/>
</dbReference>
<dbReference type="CDD" id="cd01132">
    <property type="entry name" value="F1-ATPase_alpha_CD"/>
    <property type="match status" value="1"/>
</dbReference>
<dbReference type="FunFam" id="1.20.150.20:FF:000001">
    <property type="entry name" value="ATP synthase subunit alpha"/>
    <property type="match status" value="1"/>
</dbReference>
<dbReference type="FunFam" id="2.40.30.20:FF:000001">
    <property type="entry name" value="ATP synthase subunit alpha"/>
    <property type="match status" value="1"/>
</dbReference>
<dbReference type="FunFam" id="3.40.50.300:FF:000002">
    <property type="entry name" value="ATP synthase subunit alpha"/>
    <property type="match status" value="1"/>
</dbReference>
<dbReference type="Gene3D" id="2.40.30.20">
    <property type="match status" value="1"/>
</dbReference>
<dbReference type="Gene3D" id="1.20.150.20">
    <property type="entry name" value="ATP synthase alpha/beta chain, C-terminal domain"/>
    <property type="match status" value="1"/>
</dbReference>
<dbReference type="Gene3D" id="3.40.50.300">
    <property type="entry name" value="P-loop containing nucleotide triphosphate hydrolases"/>
    <property type="match status" value="1"/>
</dbReference>
<dbReference type="HAMAP" id="MF_01346">
    <property type="entry name" value="ATP_synth_alpha_bact"/>
    <property type="match status" value="1"/>
</dbReference>
<dbReference type="InterPro" id="IPR023366">
    <property type="entry name" value="ATP_synth_asu-like_sf"/>
</dbReference>
<dbReference type="InterPro" id="IPR000793">
    <property type="entry name" value="ATP_synth_asu_C"/>
</dbReference>
<dbReference type="InterPro" id="IPR038376">
    <property type="entry name" value="ATP_synth_asu_C_sf"/>
</dbReference>
<dbReference type="InterPro" id="IPR033732">
    <property type="entry name" value="ATP_synth_F1_a_nt-bd_dom"/>
</dbReference>
<dbReference type="InterPro" id="IPR005294">
    <property type="entry name" value="ATP_synth_F1_asu"/>
</dbReference>
<dbReference type="InterPro" id="IPR020003">
    <property type="entry name" value="ATPase_a/bsu_AS"/>
</dbReference>
<dbReference type="InterPro" id="IPR004100">
    <property type="entry name" value="ATPase_F1/V1/A1_a/bsu_N"/>
</dbReference>
<dbReference type="InterPro" id="IPR036121">
    <property type="entry name" value="ATPase_F1/V1/A1_a/bsu_N_sf"/>
</dbReference>
<dbReference type="InterPro" id="IPR000194">
    <property type="entry name" value="ATPase_F1/V1/A1_a/bsu_nucl-bd"/>
</dbReference>
<dbReference type="InterPro" id="IPR027417">
    <property type="entry name" value="P-loop_NTPase"/>
</dbReference>
<dbReference type="NCBIfam" id="TIGR00962">
    <property type="entry name" value="atpA"/>
    <property type="match status" value="1"/>
</dbReference>
<dbReference type="NCBIfam" id="NF009884">
    <property type="entry name" value="PRK13343.1"/>
    <property type="match status" value="1"/>
</dbReference>
<dbReference type="PANTHER" id="PTHR48082">
    <property type="entry name" value="ATP SYNTHASE SUBUNIT ALPHA, MITOCHONDRIAL"/>
    <property type="match status" value="1"/>
</dbReference>
<dbReference type="PANTHER" id="PTHR48082:SF2">
    <property type="entry name" value="ATP SYNTHASE SUBUNIT ALPHA, MITOCHONDRIAL"/>
    <property type="match status" value="1"/>
</dbReference>
<dbReference type="Pfam" id="PF00006">
    <property type="entry name" value="ATP-synt_ab"/>
    <property type="match status" value="1"/>
</dbReference>
<dbReference type="Pfam" id="PF00306">
    <property type="entry name" value="ATP-synt_ab_C"/>
    <property type="match status" value="1"/>
</dbReference>
<dbReference type="Pfam" id="PF02874">
    <property type="entry name" value="ATP-synt_ab_N"/>
    <property type="match status" value="1"/>
</dbReference>
<dbReference type="PIRSF" id="PIRSF039088">
    <property type="entry name" value="F_ATPase_subunit_alpha"/>
    <property type="match status" value="1"/>
</dbReference>
<dbReference type="SUPFAM" id="SSF47917">
    <property type="entry name" value="C-terminal domain of alpha and beta subunits of F1 ATP synthase"/>
    <property type="match status" value="1"/>
</dbReference>
<dbReference type="SUPFAM" id="SSF50615">
    <property type="entry name" value="N-terminal domain of alpha and beta subunits of F1 ATP synthase"/>
    <property type="match status" value="1"/>
</dbReference>
<dbReference type="SUPFAM" id="SSF52540">
    <property type="entry name" value="P-loop containing nucleoside triphosphate hydrolases"/>
    <property type="match status" value="1"/>
</dbReference>
<dbReference type="PROSITE" id="PS00152">
    <property type="entry name" value="ATPASE_ALPHA_BETA"/>
    <property type="match status" value="1"/>
</dbReference>
<organism>
    <name type="scientific">Arabis hirsuta</name>
    <name type="common">Hairy rock-cress</name>
    <name type="synonym">Turritis hirsuta</name>
    <dbReference type="NCBI Taxonomy" id="78191"/>
    <lineage>
        <taxon>Eukaryota</taxon>
        <taxon>Viridiplantae</taxon>
        <taxon>Streptophyta</taxon>
        <taxon>Embryophyta</taxon>
        <taxon>Tracheophyta</taxon>
        <taxon>Spermatophyta</taxon>
        <taxon>Magnoliopsida</taxon>
        <taxon>eudicotyledons</taxon>
        <taxon>Gunneridae</taxon>
        <taxon>Pentapetalae</taxon>
        <taxon>rosids</taxon>
        <taxon>malvids</taxon>
        <taxon>Brassicales</taxon>
        <taxon>Brassicaceae</taxon>
        <taxon>Arabideae</taxon>
        <taxon>Arabis</taxon>
    </lineage>
</organism>
<feature type="chain" id="PRO_0000339071" description="ATP synthase subunit alpha, chloroplastic">
    <location>
        <begin position="1"/>
        <end position="507"/>
    </location>
</feature>
<feature type="binding site" evidence="2">
    <location>
        <begin position="170"/>
        <end position="177"/>
    </location>
    <ligand>
        <name>ATP</name>
        <dbReference type="ChEBI" id="CHEBI:30616"/>
    </ligand>
</feature>
<feature type="site" description="Required for activity" evidence="2">
    <location>
        <position position="363"/>
    </location>
</feature>
<feature type="modified residue" description="Phosphothreonine" evidence="1">
    <location>
        <position position="257"/>
    </location>
</feature>
<gene>
    <name evidence="2" type="primary">atpA</name>
</gene>
<protein>
    <recommendedName>
        <fullName evidence="2">ATP synthase subunit alpha, chloroplastic</fullName>
        <ecNumber evidence="2">7.1.2.2</ecNumber>
    </recommendedName>
    <alternativeName>
        <fullName evidence="2">ATP synthase F1 sector subunit alpha</fullName>
    </alternativeName>
    <alternativeName>
        <fullName evidence="2">F-ATPase subunit alpha</fullName>
    </alternativeName>
</protein>
<reference key="1">
    <citation type="submission" date="2007-03" db="EMBL/GenBank/DDBJ databases">
        <title>Sequencing analysis of Arabis hirsuta chloroplast DNA.</title>
        <authorList>
            <person name="Hosouchi T."/>
            <person name="Tsuruoka H."/>
            <person name="Kotani H."/>
        </authorList>
    </citation>
    <scope>NUCLEOTIDE SEQUENCE [LARGE SCALE GENOMIC DNA]</scope>
</reference>
<name>ATPA_ARAHI</name>
<sequence>MVTIRADEISNIIRERIEQYNREVTIVNTGTVLQVGDGIARIYGLDEVMAGELVEFEEGTIGIALNLESNNVGVVLMGDGLMIQEGSSVKATGKIAQIPVSEAYLGRVINALANPIDGRGKISASESRLIESPAPGIISRRSVYEPLQTGLIAIDSMIPIGRGQRELIIGDRQTGKTAVATDTILNQQGQNVICVYVAIGQKASSVAQVVTSLQERGAMEYTIVVAETADSPATLQYLAPYTGAALAEYFMYREQHTLIIYDDLSKQAQAYRQMSLLLRRPPGREAYPGDVFYLHSRLLERAAKLSSQLGEGSMTALPIVETQSGDVSAYIPTNVISITDGQIFLSADLFNAGIRPAINVGISVSRVGSAAQIKAMKQVAGKLKLELAQFAELEAFAQFSSDLDKATQNQLARGQRLRELLKQSQSAPLTVEEQIMTIYTGTNGYLDGLEIGQVRKFLVQLRTYLKTNKPQFQEIISSTKTLTAEAESFLKEGIQEQLERFLLQEKL</sequence>
<accession>A4QK03</accession>